<name>KRR1_DROGR</name>
<reference evidence="4" key="1">
    <citation type="journal article" date="2007" name="Nature">
        <title>Evolution of genes and genomes on the Drosophila phylogeny.</title>
        <authorList>
            <consortium name="Drosophila 12 genomes consortium"/>
        </authorList>
    </citation>
    <scope>NUCLEOTIDE SEQUENCE [LARGE SCALE GENOMIC DNA]</scope>
    <source>
        <strain evidence="4">Tucson 15287-2541.00</strain>
    </source>
</reference>
<gene>
    <name evidence="1" type="primary">dbe</name>
    <name evidence="1" type="synonym">dribble</name>
    <name type="ORF">GH10489</name>
</gene>
<comment type="function">
    <text evidence="1">Required for 40S ribosome biogenesis. Involved in nucleolar processing of pre-18S ribosomal RNA and ribosome assembly. Binds to RNA. Required for female germline development, cell viability during eye development and for survival of dividing cells and epithelial cells during early wing disk development (By similarity).</text>
</comment>
<comment type="subunit">
    <text evidence="1">Monomer. Component of the ribosomal small subunit (SSU) processome (By similarity).</text>
</comment>
<comment type="subcellular location">
    <subcellularLocation>
        <location evidence="1">Nucleus</location>
        <location evidence="1">Nucleolus</location>
    </subcellularLocation>
</comment>
<comment type="similarity">
    <text evidence="2">Belongs to the KRR1 family.</text>
</comment>
<feature type="chain" id="PRO_0000415653" description="KRR1 small subunit processome component homolog">
    <location>
        <begin position="1"/>
        <end position="341"/>
    </location>
</feature>
<feature type="domain" description="KH" evidence="2">
    <location>
        <begin position="126"/>
        <end position="194"/>
    </location>
</feature>
<feature type="region of interest" description="Disordered" evidence="3">
    <location>
        <begin position="230"/>
        <end position="327"/>
    </location>
</feature>
<feature type="coiled-coil region" evidence="2">
    <location>
        <begin position="271"/>
        <end position="341"/>
    </location>
</feature>
<feature type="compositionally biased region" description="Basic residues" evidence="3">
    <location>
        <begin position="230"/>
        <end position="244"/>
    </location>
</feature>
<feature type="compositionally biased region" description="Basic and acidic residues" evidence="3">
    <location>
        <begin position="272"/>
        <end position="303"/>
    </location>
</feature>
<feature type="compositionally biased region" description="Basic and acidic residues" evidence="3">
    <location>
        <begin position="313"/>
        <end position="327"/>
    </location>
</feature>
<dbReference type="EMBL" id="CH916368">
    <property type="protein sequence ID" value="EDW03465.1"/>
    <property type="molecule type" value="Genomic_DNA"/>
</dbReference>
<dbReference type="SMR" id="B4JDU5"/>
<dbReference type="FunCoup" id="B4JDU5">
    <property type="interactions" value="1729"/>
</dbReference>
<dbReference type="STRING" id="7222.B4JDU5"/>
<dbReference type="EnsemblMetazoa" id="FBtr0145903">
    <property type="protein sequence ID" value="FBpp0144395"/>
    <property type="gene ID" value="FBgn0117970"/>
</dbReference>
<dbReference type="EnsemblMetazoa" id="XM_001988562.2">
    <property type="protein sequence ID" value="XP_001988598.1"/>
    <property type="gene ID" value="LOC6562924"/>
</dbReference>
<dbReference type="GeneID" id="6562924"/>
<dbReference type="KEGG" id="dgr:6562924"/>
<dbReference type="CTD" id="33269"/>
<dbReference type="eggNOG" id="KOG2874">
    <property type="taxonomic scope" value="Eukaryota"/>
</dbReference>
<dbReference type="HOGENOM" id="CLU_040185_0_2_1"/>
<dbReference type="InParanoid" id="B4JDU5"/>
<dbReference type="OMA" id="TPDIDKW"/>
<dbReference type="OrthoDB" id="441223at2759"/>
<dbReference type="PhylomeDB" id="B4JDU5"/>
<dbReference type="Proteomes" id="UP000001070">
    <property type="component" value="Unassembled WGS sequence"/>
</dbReference>
<dbReference type="GO" id="GO:0005730">
    <property type="term" value="C:nucleolus"/>
    <property type="evidence" value="ECO:0007669"/>
    <property type="project" value="UniProtKB-SubCell"/>
</dbReference>
<dbReference type="GO" id="GO:0005654">
    <property type="term" value="C:nucleoplasm"/>
    <property type="evidence" value="ECO:0007669"/>
    <property type="project" value="EnsemblMetazoa"/>
</dbReference>
<dbReference type="GO" id="GO:0032040">
    <property type="term" value="C:small-subunit processome"/>
    <property type="evidence" value="ECO:0007669"/>
    <property type="project" value="TreeGrafter"/>
</dbReference>
<dbReference type="GO" id="GO:0003723">
    <property type="term" value="F:RNA binding"/>
    <property type="evidence" value="ECO:0007669"/>
    <property type="project" value="UniProtKB-KW"/>
</dbReference>
<dbReference type="GO" id="GO:0006364">
    <property type="term" value="P:rRNA processing"/>
    <property type="evidence" value="ECO:0007669"/>
    <property type="project" value="UniProtKB-KW"/>
</dbReference>
<dbReference type="CDD" id="cd22393">
    <property type="entry name" value="KH-I_KRR1_rpt1"/>
    <property type="match status" value="1"/>
</dbReference>
<dbReference type="CDD" id="cd22394">
    <property type="entry name" value="KH-I_KRR1_rpt2"/>
    <property type="match status" value="1"/>
</dbReference>
<dbReference type="FunFam" id="3.30.1370.10:FF:000011">
    <property type="entry name" value="KRR1 small subunit processome component"/>
    <property type="match status" value="1"/>
</dbReference>
<dbReference type="FunFam" id="3.30.1370.10:FF:000014">
    <property type="entry name" value="KRR1 small subunit processome component"/>
    <property type="match status" value="1"/>
</dbReference>
<dbReference type="Gene3D" id="3.30.1370.10">
    <property type="entry name" value="K Homology domain, type 1"/>
    <property type="match status" value="2"/>
</dbReference>
<dbReference type="InterPro" id="IPR004087">
    <property type="entry name" value="KH_dom"/>
</dbReference>
<dbReference type="InterPro" id="IPR036612">
    <property type="entry name" value="KH_dom_type_1_sf"/>
</dbReference>
<dbReference type="InterPro" id="IPR041174">
    <property type="entry name" value="KRR1-like_KH1"/>
</dbReference>
<dbReference type="InterPro" id="IPR048550">
    <property type="entry name" value="KRR1-like_KH1_euk"/>
</dbReference>
<dbReference type="InterPro" id="IPR048548">
    <property type="entry name" value="KRR1-like_KH2"/>
</dbReference>
<dbReference type="InterPro" id="IPR048549">
    <property type="entry name" value="KRR1-like_KH2_euk"/>
</dbReference>
<dbReference type="InterPro" id="IPR024166">
    <property type="entry name" value="rRNA_assembly_KRR1"/>
</dbReference>
<dbReference type="PANTHER" id="PTHR12581">
    <property type="entry name" value="HIV-1 REV BINDING PROTEIN 2, 3"/>
    <property type="match status" value="1"/>
</dbReference>
<dbReference type="PANTHER" id="PTHR12581:SF0">
    <property type="entry name" value="KRR1 SMALL SUBUNIT PROCESSOME COMPONENT HOMOLOG"/>
    <property type="match status" value="1"/>
</dbReference>
<dbReference type="Pfam" id="PF17903">
    <property type="entry name" value="KH_KRR1_1st"/>
    <property type="match status" value="1"/>
</dbReference>
<dbReference type="Pfam" id="PF21800">
    <property type="entry name" value="KH_KRR1_2nd"/>
    <property type="match status" value="1"/>
</dbReference>
<dbReference type="PIRSF" id="PIRSF006515">
    <property type="entry name" value="KRR1"/>
    <property type="match status" value="1"/>
</dbReference>
<dbReference type="SMART" id="SM00322">
    <property type="entry name" value="KH"/>
    <property type="match status" value="1"/>
</dbReference>
<dbReference type="SUPFAM" id="SSF54791">
    <property type="entry name" value="Eukaryotic type KH-domain (KH-domain type I)"/>
    <property type="match status" value="1"/>
</dbReference>
<proteinExistence type="inferred from homology"/>
<accession>B4JDU5</accession>
<keyword id="KW-0175">Coiled coil</keyword>
<keyword id="KW-0217">Developmental protein</keyword>
<keyword id="KW-0539">Nucleus</keyword>
<keyword id="KW-1185">Reference proteome</keyword>
<keyword id="KW-0687">Ribonucleoprotein</keyword>
<keyword id="KW-0690">Ribosome biogenesis</keyword>
<keyword id="KW-0694">RNA-binding</keyword>
<keyword id="KW-0698">rRNA processing</keyword>
<protein>
    <recommendedName>
        <fullName evidence="1">KRR1 small subunit processome component homolog</fullName>
    </recommendedName>
    <alternativeName>
        <fullName evidence="1">KRR-R motif-containing protein 1</fullName>
    </alternativeName>
    <alternativeName>
        <fullName evidence="1">Protein dribble</fullName>
    </alternativeName>
</protein>
<sequence length="341" mass="39382">MSDSETEETTKQSTEPVDNAWSLKIPTFKAEDNPHGMVEESSFATLFPKYREKYLKEVWPLVQQTVAEHHLRAELDLIEGSMVVKTTRKTWDPYIIIKSRDMIKLMARSVPFEQAKRVLQDETGCDIIKIGNLVHKKEKFVKRRQRLIGPNGATLKSIELLTDCYVLVQGNTVAALGPYKGLQQVRDIVLETMNNVHPIYNIKALMIKRELMKDPQLANEDWSRFLPKFKNKNISKRKQPKSRKPKGEYTPFPPAQPESKIDKQLASGEYFLNKEQKQAKRQQERVAKQAEAAKKQDERRNKDFMPPTEDSPEQNRKRPSEASKVDVKALKAKLLKANKQK</sequence>
<evidence type="ECO:0000250" key="1">
    <source>
        <dbReference type="UniProtKB" id="Q9VPU8"/>
    </source>
</evidence>
<evidence type="ECO:0000255" key="2"/>
<evidence type="ECO:0000256" key="3">
    <source>
        <dbReference type="SAM" id="MobiDB-lite"/>
    </source>
</evidence>
<evidence type="ECO:0000312" key="4">
    <source>
        <dbReference type="EMBL" id="EDW03465.1"/>
    </source>
</evidence>
<organism>
    <name type="scientific">Drosophila grimshawi</name>
    <name type="common">Hawaiian fruit fly</name>
    <name type="synonym">Idiomyia grimshawi</name>
    <dbReference type="NCBI Taxonomy" id="7222"/>
    <lineage>
        <taxon>Eukaryota</taxon>
        <taxon>Metazoa</taxon>
        <taxon>Ecdysozoa</taxon>
        <taxon>Arthropoda</taxon>
        <taxon>Hexapoda</taxon>
        <taxon>Insecta</taxon>
        <taxon>Pterygota</taxon>
        <taxon>Neoptera</taxon>
        <taxon>Endopterygota</taxon>
        <taxon>Diptera</taxon>
        <taxon>Brachycera</taxon>
        <taxon>Muscomorpha</taxon>
        <taxon>Ephydroidea</taxon>
        <taxon>Drosophilidae</taxon>
        <taxon>Drosophila</taxon>
        <taxon>Hawaiian Drosophila</taxon>
    </lineage>
</organism>